<reference key="1">
    <citation type="journal article" date="2009" name="PLoS Pathog.">
        <title>Genomic evidence for the evolution of Streptococcus equi: host restriction, increased virulence, and genetic exchange with human pathogens.</title>
        <authorList>
            <person name="Holden M.T.G."/>
            <person name="Heather Z."/>
            <person name="Paillot R."/>
            <person name="Steward K.F."/>
            <person name="Webb K."/>
            <person name="Ainslie F."/>
            <person name="Jourdan T."/>
            <person name="Bason N.C."/>
            <person name="Holroyd N.E."/>
            <person name="Mungall K."/>
            <person name="Quail M.A."/>
            <person name="Sanders M."/>
            <person name="Simmonds M."/>
            <person name="Willey D."/>
            <person name="Brooks K."/>
            <person name="Aanensen D.M."/>
            <person name="Spratt B.G."/>
            <person name="Jolley K.A."/>
            <person name="Maiden M.C.J."/>
            <person name="Kehoe M."/>
            <person name="Chanter N."/>
            <person name="Bentley S.D."/>
            <person name="Robinson C."/>
            <person name="Maskell D.J."/>
            <person name="Parkhill J."/>
            <person name="Waller A.S."/>
        </authorList>
    </citation>
    <scope>NUCLEOTIDE SEQUENCE [LARGE SCALE GENOMIC DNA]</scope>
    <source>
        <strain>4047</strain>
    </source>
</reference>
<organism>
    <name type="scientific">Streptococcus equi subsp. equi (strain 4047)</name>
    <dbReference type="NCBI Taxonomy" id="553482"/>
    <lineage>
        <taxon>Bacteria</taxon>
        <taxon>Bacillati</taxon>
        <taxon>Bacillota</taxon>
        <taxon>Bacilli</taxon>
        <taxon>Lactobacillales</taxon>
        <taxon>Streptococcaceae</taxon>
        <taxon>Streptococcus</taxon>
    </lineage>
</organism>
<name>GPMA_STRE4</name>
<feature type="chain" id="PRO_1000149531" description="2,3-bisphosphoglycerate-dependent phosphoglycerate mutase">
    <location>
        <begin position="1"/>
        <end position="231"/>
    </location>
</feature>
<feature type="active site" description="Tele-phosphohistidine intermediate" evidence="1">
    <location>
        <position position="9"/>
    </location>
</feature>
<feature type="active site" description="Proton donor/acceptor" evidence="1">
    <location>
        <position position="87"/>
    </location>
</feature>
<feature type="binding site" evidence="1">
    <location>
        <begin position="8"/>
        <end position="15"/>
    </location>
    <ligand>
        <name>substrate</name>
    </ligand>
</feature>
<feature type="binding site" evidence="1">
    <location>
        <begin position="21"/>
        <end position="22"/>
    </location>
    <ligand>
        <name>substrate</name>
    </ligand>
</feature>
<feature type="binding site" evidence="1">
    <location>
        <position position="60"/>
    </location>
    <ligand>
        <name>substrate</name>
    </ligand>
</feature>
<feature type="binding site" evidence="1">
    <location>
        <begin position="87"/>
        <end position="90"/>
    </location>
    <ligand>
        <name>substrate</name>
    </ligand>
</feature>
<feature type="binding site" evidence="1">
    <location>
        <position position="98"/>
    </location>
    <ligand>
        <name>substrate</name>
    </ligand>
</feature>
<feature type="binding site" evidence="1">
    <location>
        <begin position="114"/>
        <end position="115"/>
    </location>
    <ligand>
        <name>substrate</name>
    </ligand>
</feature>
<feature type="binding site" evidence="1">
    <location>
        <begin position="183"/>
        <end position="184"/>
    </location>
    <ligand>
        <name>substrate</name>
    </ligand>
</feature>
<feature type="site" description="Transition state stabilizer" evidence="1">
    <location>
        <position position="182"/>
    </location>
</feature>
<sequence length="231" mass="26140">MVKLVFARHGESEWNKANLFTGWADVDLSEKGTQQAIDAGKLIKEAGIAFDLAFTSVLKRAIKTTNLALEYSDQLWVPVEKSWRLNERHYGGLTGKNKAEAAEQFGDEQVHIWRRSYDVLPPDMAKDDEHSAHTDRRYAHLDHSVIPDAENLKVTLERALPFWEDKIAPALVDGKNVFVGAHGNSIRALVKHIKQLSDDEIMNVEIPNFPPLVFEFDDKLNLTAEYYLGGE</sequence>
<proteinExistence type="inferred from homology"/>
<protein>
    <recommendedName>
        <fullName evidence="1">2,3-bisphosphoglycerate-dependent phosphoglycerate mutase</fullName>
        <shortName evidence="1">BPG-dependent PGAM</shortName>
        <shortName evidence="1">PGAM</shortName>
        <shortName evidence="1">Phosphoglyceromutase</shortName>
        <shortName evidence="1">dPGM</shortName>
        <ecNumber evidence="1">5.4.2.11</ecNumber>
    </recommendedName>
</protein>
<gene>
    <name evidence="1" type="primary">gpmA</name>
    <name type="ordered locus">SEQ_0656</name>
</gene>
<comment type="function">
    <text evidence="1">Catalyzes the interconversion of 2-phosphoglycerate and 3-phosphoglycerate.</text>
</comment>
<comment type="catalytic activity">
    <reaction evidence="1">
        <text>(2R)-2-phosphoglycerate = (2R)-3-phosphoglycerate</text>
        <dbReference type="Rhea" id="RHEA:15901"/>
        <dbReference type="ChEBI" id="CHEBI:58272"/>
        <dbReference type="ChEBI" id="CHEBI:58289"/>
        <dbReference type="EC" id="5.4.2.11"/>
    </reaction>
</comment>
<comment type="pathway">
    <text evidence="1">Carbohydrate degradation; glycolysis; pyruvate from D-glyceraldehyde 3-phosphate: step 3/5.</text>
</comment>
<comment type="similarity">
    <text evidence="1">Belongs to the phosphoglycerate mutase family. BPG-dependent PGAM subfamily.</text>
</comment>
<keyword id="KW-0312">Gluconeogenesis</keyword>
<keyword id="KW-0324">Glycolysis</keyword>
<keyword id="KW-0413">Isomerase</keyword>
<evidence type="ECO:0000255" key="1">
    <source>
        <dbReference type="HAMAP-Rule" id="MF_01039"/>
    </source>
</evidence>
<dbReference type="EC" id="5.4.2.11" evidence="1"/>
<dbReference type="EMBL" id="FM204883">
    <property type="protein sequence ID" value="CAW92983.1"/>
    <property type="molecule type" value="Genomic_DNA"/>
</dbReference>
<dbReference type="RefSeq" id="WP_012515278.1">
    <property type="nucleotide sequence ID" value="NC_012471.1"/>
</dbReference>
<dbReference type="SMR" id="C0M8R8"/>
<dbReference type="KEGG" id="seu:SEQ_0656"/>
<dbReference type="HOGENOM" id="CLU_033323_1_5_9"/>
<dbReference type="OrthoDB" id="9781415at2"/>
<dbReference type="UniPathway" id="UPA00109">
    <property type="reaction ID" value="UER00186"/>
</dbReference>
<dbReference type="Proteomes" id="UP000001365">
    <property type="component" value="Chromosome"/>
</dbReference>
<dbReference type="GO" id="GO:0004619">
    <property type="term" value="F:phosphoglycerate mutase activity"/>
    <property type="evidence" value="ECO:0007669"/>
    <property type="project" value="UniProtKB-EC"/>
</dbReference>
<dbReference type="GO" id="GO:0006094">
    <property type="term" value="P:gluconeogenesis"/>
    <property type="evidence" value="ECO:0007669"/>
    <property type="project" value="UniProtKB-UniRule"/>
</dbReference>
<dbReference type="GO" id="GO:0006096">
    <property type="term" value="P:glycolytic process"/>
    <property type="evidence" value="ECO:0007669"/>
    <property type="project" value="UniProtKB-UniRule"/>
</dbReference>
<dbReference type="CDD" id="cd07067">
    <property type="entry name" value="HP_PGM_like"/>
    <property type="match status" value="1"/>
</dbReference>
<dbReference type="FunFam" id="3.40.50.1240:FF:000003">
    <property type="entry name" value="2,3-bisphosphoglycerate-dependent phosphoglycerate mutase"/>
    <property type="match status" value="1"/>
</dbReference>
<dbReference type="Gene3D" id="3.40.50.1240">
    <property type="entry name" value="Phosphoglycerate mutase-like"/>
    <property type="match status" value="1"/>
</dbReference>
<dbReference type="HAMAP" id="MF_01039">
    <property type="entry name" value="PGAM_GpmA"/>
    <property type="match status" value="1"/>
</dbReference>
<dbReference type="InterPro" id="IPR013078">
    <property type="entry name" value="His_Pase_superF_clade-1"/>
</dbReference>
<dbReference type="InterPro" id="IPR029033">
    <property type="entry name" value="His_PPase_superfam"/>
</dbReference>
<dbReference type="InterPro" id="IPR005952">
    <property type="entry name" value="Phosphogly_mut1"/>
</dbReference>
<dbReference type="NCBIfam" id="TIGR01258">
    <property type="entry name" value="pgm_1"/>
    <property type="match status" value="1"/>
</dbReference>
<dbReference type="NCBIfam" id="NF010713">
    <property type="entry name" value="PRK14115.1"/>
    <property type="match status" value="1"/>
</dbReference>
<dbReference type="NCBIfam" id="NF010715">
    <property type="entry name" value="PRK14117.1"/>
    <property type="match status" value="1"/>
</dbReference>
<dbReference type="PANTHER" id="PTHR11931">
    <property type="entry name" value="PHOSPHOGLYCERATE MUTASE"/>
    <property type="match status" value="1"/>
</dbReference>
<dbReference type="Pfam" id="PF00300">
    <property type="entry name" value="His_Phos_1"/>
    <property type="match status" value="1"/>
</dbReference>
<dbReference type="PIRSF" id="PIRSF000709">
    <property type="entry name" value="6PFK_2-Ptase"/>
    <property type="match status" value="1"/>
</dbReference>
<dbReference type="SMART" id="SM00855">
    <property type="entry name" value="PGAM"/>
    <property type="match status" value="1"/>
</dbReference>
<dbReference type="SUPFAM" id="SSF53254">
    <property type="entry name" value="Phosphoglycerate mutase-like"/>
    <property type="match status" value="1"/>
</dbReference>
<accession>C0M8R8</accession>